<gene>
    <name evidence="1" type="primary">uppP3</name>
    <name type="synonym">bacA</name>
    <name type="ordered locus">BT9727_1268</name>
</gene>
<reference key="1">
    <citation type="journal article" date="2006" name="J. Bacteriol.">
        <title>Pathogenomic sequence analysis of Bacillus cereus and Bacillus thuringiensis isolates closely related to Bacillus anthracis.</title>
        <authorList>
            <person name="Han C.S."/>
            <person name="Xie G."/>
            <person name="Challacombe J.F."/>
            <person name="Altherr M.R."/>
            <person name="Bhotika S.S."/>
            <person name="Bruce D."/>
            <person name="Campbell C.S."/>
            <person name="Campbell M.L."/>
            <person name="Chen J."/>
            <person name="Chertkov O."/>
            <person name="Cleland C."/>
            <person name="Dimitrijevic M."/>
            <person name="Doggett N.A."/>
            <person name="Fawcett J.J."/>
            <person name="Glavina T."/>
            <person name="Goodwin L.A."/>
            <person name="Hill K.K."/>
            <person name="Hitchcock P."/>
            <person name="Jackson P.J."/>
            <person name="Keim P."/>
            <person name="Kewalramani A.R."/>
            <person name="Longmire J."/>
            <person name="Lucas S."/>
            <person name="Malfatti S."/>
            <person name="McMurry K."/>
            <person name="Meincke L.J."/>
            <person name="Misra M."/>
            <person name="Moseman B.L."/>
            <person name="Mundt M."/>
            <person name="Munk A.C."/>
            <person name="Okinaka R.T."/>
            <person name="Parson-Quintana B."/>
            <person name="Reilly L.P."/>
            <person name="Richardson P."/>
            <person name="Robinson D.L."/>
            <person name="Rubin E."/>
            <person name="Saunders E."/>
            <person name="Tapia R."/>
            <person name="Tesmer J.G."/>
            <person name="Thayer N."/>
            <person name="Thompson L.S."/>
            <person name="Tice H."/>
            <person name="Ticknor L.O."/>
            <person name="Wills P.L."/>
            <person name="Brettin T.S."/>
            <person name="Gilna P."/>
        </authorList>
    </citation>
    <scope>NUCLEOTIDE SEQUENCE [LARGE SCALE GENOMIC DNA]</scope>
    <source>
        <strain>97-27</strain>
    </source>
</reference>
<proteinExistence type="inferred from homology"/>
<keyword id="KW-0046">Antibiotic resistance</keyword>
<keyword id="KW-1003">Cell membrane</keyword>
<keyword id="KW-0133">Cell shape</keyword>
<keyword id="KW-0961">Cell wall biogenesis/degradation</keyword>
<keyword id="KW-0378">Hydrolase</keyword>
<keyword id="KW-0472">Membrane</keyword>
<keyword id="KW-0573">Peptidoglycan synthesis</keyword>
<keyword id="KW-0812">Transmembrane</keyword>
<keyword id="KW-1133">Transmembrane helix</keyword>
<feature type="chain" id="PRO_0000151103" description="Undecaprenyl-diphosphatase 3">
    <location>
        <begin position="1"/>
        <end position="263"/>
    </location>
</feature>
<feature type="transmembrane region" description="Helical" evidence="1">
    <location>
        <begin position="15"/>
        <end position="37"/>
    </location>
</feature>
<feature type="transmembrane region" description="Helical" evidence="1">
    <location>
        <begin position="42"/>
        <end position="62"/>
    </location>
</feature>
<feature type="transmembrane region" description="Helical" evidence="1">
    <location>
        <begin position="83"/>
        <end position="103"/>
    </location>
</feature>
<feature type="transmembrane region" description="Helical" evidence="1">
    <location>
        <begin position="106"/>
        <end position="126"/>
    </location>
</feature>
<feature type="transmembrane region" description="Helical" evidence="1">
    <location>
        <begin position="142"/>
        <end position="162"/>
    </location>
</feature>
<feature type="transmembrane region" description="Helical" evidence="1">
    <location>
        <begin position="183"/>
        <end position="203"/>
    </location>
</feature>
<feature type="transmembrane region" description="Helical" evidence="1">
    <location>
        <begin position="216"/>
        <end position="236"/>
    </location>
</feature>
<feature type="transmembrane region" description="Helical" evidence="1">
    <location>
        <begin position="242"/>
        <end position="262"/>
    </location>
</feature>
<organism>
    <name type="scientific">Bacillus thuringiensis subsp. konkukian (strain 97-27)</name>
    <dbReference type="NCBI Taxonomy" id="281309"/>
    <lineage>
        <taxon>Bacteria</taxon>
        <taxon>Bacillati</taxon>
        <taxon>Bacillota</taxon>
        <taxon>Bacilli</taxon>
        <taxon>Bacillales</taxon>
        <taxon>Bacillaceae</taxon>
        <taxon>Bacillus</taxon>
        <taxon>Bacillus cereus group</taxon>
    </lineage>
</organism>
<sequence>MADWLIGIIMGAVEGLTEFLPVSSTGHMILTGHLIGFDDDRAKVFEVVIQLGSILAVVVIFWKRLWSLVGIGKVTDGPSLNLLHIIIGMIPAGVLGVLFHSAIKEVLFGPGPVVISLVAGGILMIVAEKFSKPSTARTLDEITYKQAFTIGMFQCLALWPGFSRSGSTISGGLLARVSHTAAAEYTFILAVPMMVAASGLDLIKSWDILSTADIQLFATGFITAFVVAMLAIVSFLKLLSRVKLTPFAYYRFILAAVFYFFIM</sequence>
<protein>
    <recommendedName>
        <fullName evidence="1">Undecaprenyl-diphosphatase 3</fullName>
        <ecNumber evidence="1">3.6.1.27</ecNumber>
    </recommendedName>
    <alternativeName>
        <fullName evidence="1">Bacitracin resistance protein 3</fullName>
    </alternativeName>
    <alternativeName>
        <fullName evidence="1">Undecaprenyl pyrophosphate phosphatase 3</fullName>
    </alternativeName>
</protein>
<comment type="function">
    <text evidence="1">Catalyzes the dephosphorylation of undecaprenyl diphosphate (UPP). Confers resistance to bacitracin.</text>
</comment>
<comment type="catalytic activity">
    <reaction evidence="1">
        <text>di-trans,octa-cis-undecaprenyl diphosphate + H2O = di-trans,octa-cis-undecaprenyl phosphate + phosphate + H(+)</text>
        <dbReference type="Rhea" id="RHEA:28094"/>
        <dbReference type="ChEBI" id="CHEBI:15377"/>
        <dbReference type="ChEBI" id="CHEBI:15378"/>
        <dbReference type="ChEBI" id="CHEBI:43474"/>
        <dbReference type="ChEBI" id="CHEBI:58405"/>
        <dbReference type="ChEBI" id="CHEBI:60392"/>
        <dbReference type="EC" id="3.6.1.27"/>
    </reaction>
</comment>
<comment type="subcellular location">
    <subcellularLocation>
        <location evidence="1">Cell membrane</location>
        <topology evidence="1">Multi-pass membrane protein</topology>
    </subcellularLocation>
</comment>
<comment type="miscellaneous">
    <text>Bacitracin is thought to be involved in the inhibition of peptidoglycan synthesis by sequestering undecaprenyl diphosphate, thereby reducing the pool of lipid carrier available.</text>
</comment>
<comment type="similarity">
    <text evidence="1">Belongs to the UppP family.</text>
</comment>
<evidence type="ECO:0000255" key="1">
    <source>
        <dbReference type="HAMAP-Rule" id="MF_01006"/>
    </source>
</evidence>
<name>UPPP3_BACHK</name>
<accession>Q6HLG8</accession>
<dbReference type="EC" id="3.6.1.27" evidence="1"/>
<dbReference type="EMBL" id="AE017355">
    <property type="protein sequence ID" value="AAT61949.1"/>
    <property type="molecule type" value="Genomic_DNA"/>
</dbReference>
<dbReference type="RefSeq" id="YP_035603.1">
    <property type="nucleotide sequence ID" value="NC_005957.1"/>
</dbReference>
<dbReference type="SMR" id="Q6HLG8"/>
<dbReference type="KEGG" id="btk:BT9727_1268"/>
<dbReference type="PATRIC" id="fig|281309.8.peg.1336"/>
<dbReference type="HOGENOM" id="CLU_060296_2_0_9"/>
<dbReference type="Proteomes" id="UP000001301">
    <property type="component" value="Chromosome"/>
</dbReference>
<dbReference type="GO" id="GO:0005886">
    <property type="term" value="C:plasma membrane"/>
    <property type="evidence" value="ECO:0007669"/>
    <property type="project" value="UniProtKB-SubCell"/>
</dbReference>
<dbReference type="GO" id="GO:0050380">
    <property type="term" value="F:undecaprenyl-diphosphatase activity"/>
    <property type="evidence" value="ECO:0007669"/>
    <property type="project" value="UniProtKB-UniRule"/>
</dbReference>
<dbReference type="GO" id="GO:0071555">
    <property type="term" value="P:cell wall organization"/>
    <property type="evidence" value="ECO:0007669"/>
    <property type="project" value="UniProtKB-KW"/>
</dbReference>
<dbReference type="GO" id="GO:0009252">
    <property type="term" value="P:peptidoglycan biosynthetic process"/>
    <property type="evidence" value="ECO:0007669"/>
    <property type="project" value="UniProtKB-KW"/>
</dbReference>
<dbReference type="GO" id="GO:0008360">
    <property type="term" value="P:regulation of cell shape"/>
    <property type="evidence" value="ECO:0007669"/>
    <property type="project" value="UniProtKB-KW"/>
</dbReference>
<dbReference type="GO" id="GO:0046677">
    <property type="term" value="P:response to antibiotic"/>
    <property type="evidence" value="ECO:0007669"/>
    <property type="project" value="UniProtKB-UniRule"/>
</dbReference>
<dbReference type="HAMAP" id="MF_01006">
    <property type="entry name" value="Undec_diphosphatase"/>
    <property type="match status" value="1"/>
</dbReference>
<dbReference type="InterPro" id="IPR003824">
    <property type="entry name" value="UppP"/>
</dbReference>
<dbReference type="NCBIfam" id="NF001388">
    <property type="entry name" value="PRK00281.1-1"/>
    <property type="match status" value="1"/>
</dbReference>
<dbReference type="NCBIfam" id="NF001389">
    <property type="entry name" value="PRK00281.1-2"/>
    <property type="match status" value="1"/>
</dbReference>
<dbReference type="NCBIfam" id="NF001390">
    <property type="entry name" value="PRK00281.1-4"/>
    <property type="match status" value="1"/>
</dbReference>
<dbReference type="NCBIfam" id="TIGR00753">
    <property type="entry name" value="undec_PP_bacA"/>
    <property type="match status" value="1"/>
</dbReference>
<dbReference type="PANTHER" id="PTHR30622">
    <property type="entry name" value="UNDECAPRENYL-DIPHOSPHATASE"/>
    <property type="match status" value="1"/>
</dbReference>
<dbReference type="PANTHER" id="PTHR30622:SF3">
    <property type="entry name" value="UNDECAPRENYL-DIPHOSPHATASE"/>
    <property type="match status" value="1"/>
</dbReference>
<dbReference type="Pfam" id="PF02673">
    <property type="entry name" value="BacA"/>
    <property type="match status" value="1"/>
</dbReference>